<name>MSRA_MYCPN</name>
<evidence type="ECO:0000250" key="1"/>
<evidence type="ECO:0000269" key="2">
    <source>
    </source>
</evidence>
<evidence type="ECO:0000305" key="3"/>
<proteinExistence type="inferred from homology"/>
<gene>
    <name type="primary">msrA</name>
    <name type="synonym">pmsR</name>
    <name type="ordered locus">MPN_607</name>
    <name type="ORF">MP235</name>
</gene>
<feature type="chain" id="PRO_0000138558" description="Peptide methionine sulfoxide reductase MsrA">
    <location>
        <begin position="1"/>
        <end position="157"/>
    </location>
</feature>
<feature type="active site" evidence="1">
    <location>
        <position position="10"/>
    </location>
</feature>
<organism>
    <name type="scientific">Mycoplasma pneumoniae (strain ATCC 29342 / M129 / Subtype 1)</name>
    <name type="common">Mycoplasmoides pneumoniae</name>
    <dbReference type="NCBI Taxonomy" id="272634"/>
    <lineage>
        <taxon>Bacteria</taxon>
        <taxon>Bacillati</taxon>
        <taxon>Mycoplasmatota</taxon>
        <taxon>Mycoplasmoidales</taxon>
        <taxon>Mycoplasmoidaceae</taxon>
        <taxon>Mycoplasmoides</taxon>
    </lineage>
</organism>
<accession>P75188</accession>
<sequence length="157" mass="18379">MKQIYFGGGCFWGTQKYFDLIKGVQKTSVGYLNSNMKNPTYEQVCSGQTNAVEAVFVEYDENKVSLNELIDAFFKVIDPTIRNRQGNDIGTQYRTGVYWVDPQDEQLITQKFRELQANYPKPIVTENRAMENYFLAEEYHQDYLKKNPHGYCHIKFD</sequence>
<reference key="1">
    <citation type="journal article" date="1996" name="Nucleic Acids Res.">
        <title>Complete sequence analysis of the genome of the bacterium Mycoplasma pneumoniae.</title>
        <authorList>
            <person name="Himmelreich R."/>
            <person name="Hilbert H."/>
            <person name="Plagens H."/>
            <person name="Pirkl E."/>
            <person name="Li B.-C."/>
            <person name="Herrmann R."/>
        </authorList>
    </citation>
    <scope>NUCLEOTIDE SEQUENCE [LARGE SCALE GENOMIC DNA]</scope>
    <source>
        <strain>ATCC 29342 / M129 / Subtype 1</strain>
    </source>
</reference>
<reference key="2">
    <citation type="journal article" date="2010" name="Appl. Environ. Microbiol.">
        <title>Targeted chromosomal knockouts in Mycoplasma pneumoniae.</title>
        <authorList>
            <person name="Krishnakumar R."/>
            <person name="Assad-Garcia N."/>
            <person name="Benders G.A."/>
            <person name="Phan Q."/>
            <person name="Montague M.G."/>
            <person name="Glass J.I."/>
        </authorList>
    </citation>
    <scope>DISRUPTION PHENOTYPE</scope>
    <source>
        <strain>ATCC 15531 / FH / type 2</strain>
        <strain>ATCC 29342 / M129-B170 / type 1</strain>
        <strain>ATCC 29342 / M129-B7 / type 1</strain>
    </source>
</reference>
<protein>
    <recommendedName>
        <fullName>Peptide methionine sulfoxide reductase MsrA</fullName>
        <shortName>Protein-methionine-S-oxide reductase</shortName>
        <ecNumber>1.8.4.11</ecNumber>
    </recommendedName>
    <alternativeName>
        <fullName>Peptide-methionine (S)-S-oxide reductase</fullName>
        <shortName>Peptide Met(O) reductase</shortName>
    </alternativeName>
</protein>
<keyword id="KW-0560">Oxidoreductase</keyword>
<keyword id="KW-1185">Reference proteome</keyword>
<dbReference type="EC" id="1.8.4.11"/>
<dbReference type="EMBL" id="U00089">
    <property type="protein sequence ID" value="AAB95883.1"/>
    <property type="molecule type" value="Genomic_DNA"/>
</dbReference>
<dbReference type="PIR" id="S73561">
    <property type="entry name" value="S73561"/>
</dbReference>
<dbReference type="RefSeq" id="NP_110296.1">
    <property type="nucleotide sequence ID" value="NC_000912.1"/>
</dbReference>
<dbReference type="RefSeq" id="WP_010874964.1">
    <property type="nucleotide sequence ID" value="NZ_OU342337.1"/>
</dbReference>
<dbReference type="SMR" id="P75188"/>
<dbReference type="STRING" id="272634.MPN_607"/>
<dbReference type="EnsemblBacteria" id="AAB95883">
    <property type="protein sequence ID" value="AAB95883"/>
    <property type="gene ID" value="MPN_607"/>
</dbReference>
<dbReference type="GeneID" id="66608708"/>
<dbReference type="KEGG" id="mpn:MPN_607"/>
<dbReference type="PATRIC" id="fig|272634.6.peg.670"/>
<dbReference type="HOGENOM" id="CLU_031040_10_2_14"/>
<dbReference type="OrthoDB" id="4174719at2"/>
<dbReference type="BioCyc" id="MPNE272634:G1GJ3-982-MONOMER"/>
<dbReference type="Proteomes" id="UP000000808">
    <property type="component" value="Chromosome"/>
</dbReference>
<dbReference type="GO" id="GO:0005737">
    <property type="term" value="C:cytoplasm"/>
    <property type="evidence" value="ECO:0007669"/>
    <property type="project" value="TreeGrafter"/>
</dbReference>
<dbReference type="GO" id="GO:0036456">
    <property type="term" value="F:L-methionine-(S)-S-oxide reductase activity"/>
    <property type="evidence" value="ECO:0007669"/>
    <property type="project" value="TreeGrafter"/>
</dbReference>
<dbReference type="GO" id="GO:0008113">
    <property type="term" value="F:peptide-methionine (S)-S-oxide reductase activity"/>
    <property type="evidence" value="ECO:0007669"/>
    <property type="project" value="UniProtKB-UniRule"/>
</dbReference>
<dbReference type="GO" id="GO:0034599">
    <property type="term" value="P:cellular response to oxidative stress"/>
    <property type="evidence" value="ECO:0007669"/>
    <property type="project" value="TreeGrafter"/>
</dbReference>
<dbReference type="GO" id="GO:0036211">
    <property type="term" value="P:protein modification process"/>
    <property type="evidence" value="ECO:0007669"/>
    <property type="project" value="UniProtKB-UniRule"/>
</dbReference>
<dbReference type="Gene3D" id="3.30.1060.10">
    <property type="entry name" value="Peptide methionine sulphoxide reductase MsrA"/>
    <property type="match status" value="1"/>
</dbReference>
<dbReference type="HAMAP" id="MF_01401">
    <property type="entry name" value="MsrA"/>
    <property type="match status" value="1"/>
</dbReference>
<dbReference type="InterPro" id="IPR002569">
    <property type="entry name" value="Met_Sox_Rdtase_MsrA_dom"/>
</dbReference>
<dbReference type="InterPro" id="IPR036509">
    <property type="entry name" value="Met_Sox_Rdtase_MsrA_sf"/>
</dbReference>
<dbReference type="InterPro" id="IPR050162">
    <property type="entry name" value="MsrA_MetSO_reductase"/>
</dbReference>
<dbReference type="NCBIfam" id="TIGR00401">
    <property type="entry name" value="msrA"/>
    <property type="match status" value="1"/>
</dbReference>
<dbReference type="PANTHER" id="PTHR42799">
    <property type="entry name" value="MITOCHONDRIAL PEPTIDE METHIONINE SULFOXIDE REDUCTASE"/>
    <property type="match status" value="1"/>
</dbReference>
<dbReference type="PANTHER" id="PTHR42799:SF2">
    <property type="entry name" value="MITOCHONDRIAL PEPTIDE METHIONINE SULFOXIDE REDUCTASE"/>
    <property type="match status" value="1"/>
</dbReference>
<dbReference type="Pfam" id="PF01625">
    <property type="entry name" value="PMSR"/>
    <property type="match status" value="1"/>
</dbReference>
<dbReference type="SUPFAM" id="SSF55068">
    <property type="entry name" value="Peptide methionine sulfoxide reductase"/>
    <property type="match status" value="1"/>
</dbReference>
<comment type="function">
    <text evidence="1">Has an important function as a repair enzyme for proteins that have been inactivated by oxidation. Catalyzes the reversible oxidation-reduction of methionine sulfoxide in proteins to methionine (By similarity).</text>
</comment>
<comment type="catalytic activity">
    <reaction>
        <text>L-methionyl-[protein] + [thioredoxin]-disulfide + H2O = L-methionyl-(S)-S-oxide-[protein] + [thioredoxin]-dithiol</text>
        <dbReference type="Rhea" id="RHEA:14217"/>
        <dbReference type="Rhea" id="RHEA-COMP:10698"/>
        <dbReference type="Rhea" id="RHEA-COMP:10700"/>
        <dbReference type="Rhea" id="RHEA-COMP:12313"/>
        <dbReference type="Rhea" id="RHEA-COMP:12315"/>
        <dbReference type="ChEBI" id="CHEBI:15377"/>
        <dbReference type="ChEBI" id="CHEBI:16044"/>
        <dbReference type="ChEBI" id="CHEBI:29950"/>
        <dbReference type="ChEBI" id="CHEBI:44120"/>
        <dbReference type="ChEBI" id="CHEBI:50058"/>
        <dbReference type="EC" id="1.8.4.11"/>
    </reaction>
</comment>
<comment type="catalytic activity">
    <reaction>
        <text>[thioredoxin]-disulfide + L-methionine + H2O = L-methionine (S)-S-oxide + [thioredoxin]-dithiol</text>
        <dbReference type="Rhea" id="RHEA:19993"/>
        <dbReference type="Rhea" id="RHEA-COMP:10698"/>
        <dbReference type="Rhea" id="RHEA-COMP:10700"/>
        <dbReference type="ChEBI" id="CHEBI:15377"/>
        <dbReference type="ChEBI" id="CHEBI:29950"/>
        <dbReference type="ChEBI" id="CHEBI:50058"/>
        <dbReference type="ChEBI" id="CHEBI:57844"/>
        <dbReference type="ChEBI" id="CHEBI:58772"/>
        <dbReference type="EC" id="1.8.4.11"/>
    </reaction>
</comment>
<comment type="disruption phenotype">
    <text evidence="2">Non-essential, it can be deleted.</text>
</comment>
<comment type="similarity">
    <text evidence="3">Belongs to the MsrA Met sulfoxide reductase family.</text>
</comment>